<gene>
    <name evidence="1" type="primary">miaB</name>
    <name type="ordered locus">DR_1150</name>
</gene>
<organism>
    <name type="scientific">Deinococcus radiodurans (strain ATCC 13939 / DSM 20539 / JCM 16871 / CCUG 27074 / LMG 4051 / NBRC 15346 / NCIMB 9279 / VKM B-1422 / R1)</name>
    <dbReference type="NCBI Taxonomy" id="243230"/>
    <lineage>
        <taxon>Bacteria</taxon>
        <taxon>Thermotogati</taxon>
        <taxon>Deinococcota</taxon>
        <taxon>Deinococci</taxon>
        <taxon>Deinococcales</taxon>
        <taxon>Deinococcaceae</taxon>
        <taxon>Deinococcus</taxon>
    </lineage>
</organism>
<comment type="function">
    <text evidence="1">Catalyzes the methylthiolation of N6-(dimethylallyl)adenosine (i(6)A), leading to the formation of 2-methylthio-N6-(dimethylallyl)adenosine (ms(2)i(6)A) at position 37 in tRNAs that read codons beginning with uridine.</text>
</comment>
<comment type="catalytic activity">
    <reaction evidence="1">
        <text>N(6)-dimethylallyladenosine(37) in tRNA + (sulfur carrier)-SH + AH2 + 2 S-adenosyl-L-methionine = 2-methylsulfanyl-N(6)-dimethylallyladenosine(37) in tRNA + (sulfur carrier)-H + 5'-deoxyadenosine + L-methionine + A + S-adenosyl-L-homocysteine + 2 H(+)</text>
        <dbReference type="Rhea" id="RHEA:37067"/>
        <dbReference type="Rhea" id="RHEA-COMP:10375"/>
        <dbReference type="Rhea" id="RHEA-COMP:10376"/>
        <dbReference type="Rhea" id="RHEA-COMP:14737"/>
        <dbReference type="Rhea" id="RHEA-COMP:14739"/>
        <dbReference type="ChEBI" id="CHEBI:13193"/>
        <dbReference type="ChEBI" id="CHEBI:15378"/>
        <dbReference type="ChEBI" id="CHEBI:17319"/>
        <dbReference type="ChEBI" id="CHEBI:17499"/>
        <dbReference type="ChEBI" id="CHEBI:29917"/>
        <dbReference type="ChEBI" id="CHEBI:57844"/>
        <dbReference type="ChEBI" id="CHEBI:57856"/>
        <dbReference type="ChEBI" id="CHEBI:59789"/>
        <dbReference type="ChEBI" id="CHEBI:64428"/>
        <dbReference type="ChEBI" id="CHEBI:74415"/>
        <dbReference type="ChEBI" id="CHEBI:74417"/>
        <dbReference type="EC" id="2.8.4.3"/>
    </reaction>
</comment>
<comment type="cofactor">
    <cofactor evidence="1">
        <name>[4Fe-4S] cluster</name>
        <dbReference type="ChEBI" id="CHEBI:49883"/>
    </cofactor>
    <text evidence="1">Binds 2 [4Fe-4S] clusters. One cluster is coordinated with 3 cysteines and an exchangeable S-adenosyl-L-methionine.</text>
</comment>
<comment type="subunit">
    <text evidence="1">Monomer.</text>
</comment>
<comment type="subcellular location">
    <subcellularLocation>
        <location evidence="1">Cytoplasm</location>
    </subcellularLocation>
</comment>
<comment type="similarity">
    <text evidence="1">Belongs to the methylthiotransferase family. MiaB subfamily.</text>
</comment>
<proteinExistence type="inferred from homology"/>
<evidence type="ECO:0000255" key="1">
    <source>
        <dbReference type="HAMAP-Rule" id="MF_01864"/>
    </source>
</evidence>
<evidence type="ECO:0000255" key="2">
    <source>
        <dbReference type="PROSITE-ProRule" id="PRU01266"/>
    </source>
</evidence>
<evidence type="ECO:0000256" key="3">
    <source>
        <dbReference type="SAM" id="MobiDB-lite"/>
    </source>
</evidence>
<reference key="1">
    <citation type="journal article" date="1999" name="Science">
        <title>Genome sequence of the radioresistant bacterium Deinococcus radiodurans R1.</title>
        <authorList>
            <person name="White O."/>
            <person name="Eisen J.A."/>
            <person name="Heidelberg J.F."/>
            <person name="Hickey E.K."/>
            <person name="Peterson J.D."/>
            <person name="Dodson R.J."/>
            <person name="Haft D.H."/>
            <person name="Gwinn M.L."/>
            <person name="Nelson W.C."/>
            <person name="Richardson D.L."/>
            <person name="Moffat K.S."/>
            <person name="Qin H."/>
            <person name="Jiang L."/>
            <person name="Pamphile W."/>
            <person name="Crosby M."/>
            <person name="Shen M."/>
            <person name="Vamathevan J.J."/>
            <person name="Lam P."/>
            <person name="McDonald L.A."/>
            <person name="Utterback T.R."/>
            <person name="Zalewski C."/>
            <person name="Makarova K.S."/>
            <person name="Aravind L."/>
            <person name="Daly M.J."/>
            <person name="Minton K.W."/>
            <person name="Fleischmann R.D."/>
            <person name="Ketchum K.A."/>
            <person name="Nelson K.E."/>
            <person name="Salzberg S.L."/>
            <person name="Smith H.O."/>
            <person name="Venter J.C."/>
            <person name="Fraser C.M."/>
        </authorList>
    </citation>
    <scope>NUCLEOTIDE SEQUENCE [LARGE SCALE GENOMIC DNA]</scope>
    <source>
        <strain>ATCC 13939 / DSM 20539 / JCM 16871 / CCUG 27074 / LMG 4051 / NBRC 15346 / NCIMB 9279 / VKM B-1422 / R1</strain>
    </source>
</reference>
<sequence length="505" mass="55753">MGQKAKAQAPTTHPRPHTLSSQVAPALPRRPRHAAPESLRQARGEVMKAHLITYGCQMNEYDTHLVQSQLVSFGADIVESPDEADFVLVNTCAVRGKPVDKVRSLLGDLRKQKAQRSLVVGMMGCLAQLEEGQQIARKFEVDVLLGPGSLLDIGAALESNERFWGLQFKDELHDHIPPPPSGKLQAHLTIMRGCDHHCTYCIVPTTRGPQVSRHPDDILRELDMQLAAGVREVTLLGQNVNAYGVDQGAKLKGYPSFADLLRMVGASGIERVKFTTSHPMNFTEDVAAAIGETPAICEFVHLPVQSGSDRVLRRMAREYNREKYLTHIAQIKKHIPDVVLATDIIVGFPGETEEDFQDTLSLYDEVGYDSAYMFIYSPRPGTPSYKHFQDLPRELKTERLQRLIARQKDWSARKNAQKVGTVQQVLLRGDAHDAGFLEGHTRGNHPTVVPKAIGADGAGVYQVRIDHATPHMMYGHILGPDGQPLPEQPRFNPEAAAVGGALPML</sequence>
<dbReference type="EC" id="2.8.4.3" evidence="1"/>
<dbReference type="EMBL" id="AE000513">
    <property type="protein sequence ID" value="AAF10722.1"/>
    <property type="molecule type" value="Genomic_DNA"/>
</dbReference>
<dbReference type="PIR" id="H75431">
    <property type="entry name" value="H75431"/>
</dbReference>
<dbReference type="RefSeq" id="NP_294874.1">
    <property type="nucleotide sequence ID" value="NC_001263.1"/>
</dbReference>
<dbReference type="SMR" id="Q9RV79"/>
<dbReference type="FunCoup" id="Q9RV79">
    <property type="interactions" value="470"/>
</dbReference>
<dbReference type="STRING" id="243230.DR_1150"/>
<dbReference type="PaxDb" id="243230-DR_1150"/>
<dbReference type="EnsemblBacteria" id="AAF10722">
    <property type="protein sequence ID" value="AAF10722"/>
    <property type="gene ID" value="DR_1150"/>
</dbReference>
<dbReference type="KEGG" id="dra:DR_1150"/>
<dbReference type="PATRIC" id="fig|243230.17.peg.1347"/>
<dbReference type="eggNOG" id="COG0621">
    <property type="taxonomic scope" value="Bacteria"/>
</dbReference>
<dbReference type="HOGENOM" id="CLU_018697_2_0_0"/>
<dbReference type="InParanoid" id="Q9RV79"/>
<dbReference type="OrthoDB" id="9805215at2"/>
<dbReference type="Proteomes" id="UP000002524">
    <property type="component" value="Chromosome 1"/>
</dbReference>
<dbReference type="GO" id="GO:0005829">
    <property type="term" value="C:cytosol"/>
    <property type="evidence" value="ECO:0000318"/>
    <property type="project" value="GO_Central"/>
</dbReference>
<dbReference type="GO" id="GO:0051539">
    <property type="term" value="F:4 iron, 4 sulfur cluster binding"/>
    <property type="evidence" value="ECO:0000318"/>
    <property type="project" value="GO_Central"/>
</dbReference>
<dbReference type="GO" id="GO:0046872">
    <property type="term" value="F:metal ion binding"/>
    <property type="evidence" value="ECO:0007669"/>
    <property type="project" value="UniProtKB-KW"/>
</dbReference>
<dbReference type="GO" id="GO:0035597">
    <property type="term" value="F:N6-isopentenyladenosine methylthiotransferase activity"/>
    <property type="evidence" value="ECO:0000318"/>
    <property type="project" value="GO_Central"/>
</dbReference>
<dbReference type="GO" id="GO:0035600">
    <property type="term" value="P:tRNA methylthiolation"/>
    <property type="evidence" value="ECO:0000318"/>
    <property type="project" value="GO_Central"/>
</dbReference>
<dbReference type="CDD" id="cd01335">
    <property type="entry name" value="Radical_SAM"/>
    <property type="match status" value="1"/>
</dbReference>
<dbReference type="FunFam" id="3.40.50.12160:FF:000003">
    <property type="entry name" value="CDK5 regulatory subunit-associated protein 1"/>
    <property type="match status" value="1"/>
</dbReference>
<dbReference type="FunFam" id="3.80.30.20:FF:000001">
    <property type="entry name" value="tRNA-2-methylthio-N(6)-dimethylallyladenosine synthase 2"/>
    <property type="match status" value="1"/>
</dbReference>
<dbReference type="Gene3D" id="3.40.50.12160">
    <property type="entry name" value="Methylthiotransferase, N-terminal domain"/>
    <property type="match status" value="1"/>
</dbReference>
<dbReference type="Gene3D" id="3.80.30.20">
    <property type="entry name" value="tm_1862 like domain"/>
    <property type="match status" value="1"/>
</dbReference>
<dbReference type="HAMAP" id="MF_01864">
    <property type="entry name" value="tRNA_metthiotr_MiaB"/>
    <property type="match status" value="1"/>
</dbReference>
<dbReference type="InterPro" id="IPR006638">
    <property type="entry name" value="Elp3/MiaA/NifB-like_rSAM"/>
</dbReference>
<dbReference type="InterPro" id="IPR005839">
    <property type="entry name" value="Methylthiotransferase"/>
</dbReference>
<dbReference type="InterPro" id="IPR020612">
    <property type="entry name" value="Methylthiotransferase_CS"/>
</dbReference>
<dbReference type="InterPro" id="IPR013848">
    <property type="entry name" value="Methylthiotransferase_N"/>
</dbReference>
<dbReference type="InterPro" id="IPR038135">
    <property type="entry name" value="Methylthiotransferase_N_sf"/>
</dbReference>
<dbReference type="InterPro" id="IPR006463">
    <property type="entry name" value="MiaB_methiolase"/>
</dbReference>
<dbReference type="InterPro" id="IPR007197">
    <property type="entry name" value="rSAM"/>
</dbReference>
<dbReference type="InterPro" id="IPR023404">
    <property type="entry name" value="rSAM_horseshoe"/>
</dbReference>
<dbReference type="NCBIfam" id="TIGR01574">
    <property type="entry name" value="miaB-methiolase"/>
    <property type="match status" value="1"/>
</dbReference>
<dbReference type="NCBIfam" id="TIGR00089">
    <property type="entry name" value="MiaB/RimO family radical SAM methylthiotransferase"/>
    <property type="match status" value="1"/>
</dbReference>
<dbReference type="PANTHER" id="PTHR43020">
    <property type="entry name" value="CDK5 REGULATORY SUBUNIT-ASSOCIATED PROTEIN 1"/>
    <property type="match status" value="1"/>
</dbReference>
<dbReference type="PANTHER" id="PTHR43020:SF2">
    <property type="entry name" value="MITOCHONDRIAL TRNA METHYLTHIOTRANSFERASE CDK5RAP1"/>
    <property type="match status" value="1"/>
</dbReference>
<dbReference type="Pfam" id="PF04055">
    <property type="entry name" value="Radical_SAM"/>
    <property type="match status" value="1"/>
</dbReference>
<dbReference type="Pfam" id="PF00919">
    <property type="entry name" value="UPF0004"/>
    <property type="match status" value="1"/>
</dbReference>
<dbReference type="SFLD" id="SFLDF00273">
    <property type="entry name" value="(dimethylallyl)adenosine_tRNA"/>
    <property type="match status" value="1"/>
</dbReference>
<dbReference type="SFLD" id="SFLDG01082">
    <property type="entry name" value="B12-binding_domain_containing"/>
    <property type="match status" value="1"/>
</dbReference>
<dbReference type="SFLD" id="SFLDG01061">
    <property type="entry name" value="methylthiotransferase"/>
    <property type="match status" value="1"/>
</dbReference>
<dbReference type="SMART" id="SM00729">
    <property type="entry name" value="Elp3"/>
    <property type="match status" value="1"/>
</dbReference>
<dbReference type="SUPFAM" id="SSF102114">
    <property type="entry name" value="Radical SAM enzymes"/>
    <property type="match status" value="1"/>
</dbReference>
<dbReference type="PROSITE" id="PS51449">
    <property type="entry name" value="MTTASE_N"/>
    <property type="match status" value="1"/>
</dbReference>
<dbReference type="PROSITE" id="PS01278">
    <property type="entry name" value="MTTASE_RADICAL"/>
    <property type="match status" value="1"/>
</dbReference>
<dbReference type="PROSITE" id="PS51918">
    <property type="entry name" value="RADICAL_SAM"/>
    <property type="match status" value="1"/>
</dbReference>
<protein>
    <recommendedName>
        <fullName evidence="1">tRNA-2-methylthio-N(6)-dimethylallyladenosine synthase</fullName>
        <ecNumber evidence="1">2.8.4.3</ecNumber>
    </recommendedName>
    <alternativeName>
        <fullName evidence="1">(Dimethylallyl)adenosine tRNA methylthiotransferase MiaB</fullName>
    </alternativeName>
    <alternativeName>
        <fullName evidence="1">tRNA-i(6)A37 methylthiotransferase</fullName>
    </alternativeName>
</protein>
<accession>Q9RV79</accession>
<name>MIAB_DEIRA</name>
<feature type="chain" id="PRO_0000374259" description="tRNA-2-methylthio-N(6)-dimethylallyladenosine synthase">
    <location>
        <begin position="1"/>
        <end position="505"/>
    </location>
</feature>
<feature type="domain" description="MTTase N-terminal" evidence="1">
    <location>
        <begin position="47"/>
        <end position="162"/>
    </location>
</feature>
<feature type="domain" description="Radical SAM core" evidence="2">
    <location>
        <begin position="180"/>
        <end position="413"/>
    </location>
</feature>
<feature type="domain" description="TRAM" evidence="1">
    <location>
        <begin position="416"/>
        <end position="479"/>
    </location>
</feature>
<feature type="region of interest" description="Disordered" evidence="3">
    <location>
        <begin position="1"/>
        <end position="39"/>
    </location>
</feature>
<feature type="binding site" evidence="1">
    <location>
        <position position="56"/>
    </location>
    <ligand>
        <name>[4Fe-4S] cluster</name>
        <dbReference type="ChEBI" id="CHEBI:49883"/>
        <label>1</label>
    </ligand>
</feature>
<feature type="binding site" evidence="1">
    <location>
        <position position="92"/>
    </location>
    <ligand>
        <name>[4Fe-4S] cluster</name>
        <dbReference type="ChEBI" id="CHEBI:49883"/>
        <label>1</label>
    </ligand>
</feature>
<feature type="binding site" evidence="1">
    <location>
        <position position="125"/>
    </location>
    <ligand>
        <name>[4Fe-4S] cluster</name>
        <dbReference type="ChEBI" id="CHEBI:49883"/>
        <label>1</label>
    </ligand>
</feature>
<feature type="binding site" evidence="1">
    <location>
        <position position="194"/>
    </location>
    <ligand>
        <name>[4Fe-4S] cluster</name>
        <dbReference type="ChEBI" id="CHEBI:49883"/>
        <label>2</label>
        <note>4Fe-4S-S-AdoMet</note>
    </ligand>
</feature>
<feature type="binding site" evidence="1">
    <location>
        <position position="198"/>
    </location>
    <ligand>
        <name>[4Fe-4S] cluster</name>
        <dbReference type="ChEBI" id="CHEBI:49883"/>
        <label>2</label>
        <note>4Fe-4S-S-AdoMet</note>
    </ligand>
</feature>
<feature type="binding site" evidence="1">
    <location>
        <position position="201"/>
    </location>
    <ligand>
        <name>[4Fe-4S] cluster</name>
        <dbReference type="ChEBI" id="CHEBI:49883"/>
        <label>2</label>
        <note>4Fe-4S-S-AdoMet</note>
    </ligand>
</feature>
<keyword id="KW-0004">4Fe-4S</keyword>
<keyword id="KW-0963">Cytoplasm</keyword>
<keyword id="KW-0408">Iron</keyword>
<keyword id="KW-0411">Iron-sulfur</keyword>
<keyword id="KW-0479">Metal-binding</keyword>
<keyword id="KW-1185">Reference proteome</keyword>
<keyword id="KW-0949">S-adenosyl-L-methionine</keyword>
<keyword id="KW-0808">Transferase</keyword>
<keyword id="KW-0819">tRNA processing</keyword>